<accession>Q6B924</accession>
<geneLocation type="chloroplast"/>
<sequence length="276" mass="29803">MSFNLISSYLHLTKPLIIDNKSFPSRLMLGTGKYRSLRNASISIRNSSASIVTVAIRRAYNNKLKGKSSLLDGLDWKKLWILPNTAGCETVEEAIRIAILGREMARRLGQVDNNFVKLEVIADSEYLFPDPYGTLKAAEYLVSNNFTVLPYINPDPVLAKQLEEIGCSAIMPLGSPIGSGQGLQNLLNLQIIINNAKVPIIIDAGIGTASEASQAMEMGASGVLLNTAVAKATNPEYMAEAMKLGVISGRIAYLSGRISKQDKAIASSPSEGIFIK</sequence>
<dbReference type="EC" id="2.8.1.10" evidence="1"/>
<dbReference type="EMBL" id="AY673996">
    <property type="protein sequence ID" value="AAT79611.1"/>
    <property type="molecule type" value="Genomic_DNA"/>
</dbReference>
<dbReference type="RefSeq" id="YP_063536.1">
    <property type="nucleotide sequence ID" value="NC_006137.1"/>
</dbReference>
<dbReference type="SMR" id="Q6B924"/>
<dbReference type="GeneID" id="2944134"/>
<dbReference type="UniPathway" id="UPA00060"/>
<dbReference type="GO" id="GO:0009507">
    <property type="term" value="C:chloroplast"/>
    <property type="evidence" value="ECO:0007669"/>
    <property type="project" value="UniProtKB-SubCell"/>
</dbReference>
<dbReference type="GO" id="GO:1990107">
    <property type="term" value="F:thiazole synthase activity"/>
    <property type="evidence" value="ECO:0007669"/>
    <property type="project" value="UniProtKB-EC"/>
</dbReference>
<dbReference type="GO" id="GO:0009229">
    <property type="term" value="P:thiamine diphosphate biosynthetic process"/>
    <property type="evidence" value="ECO:0007669"/>
    <property type="project" value="UniProtKB-UniRule"/>
</dbReference>
<dbReference type="CDD" id="cd04728">
    <property type="entry name" value="ThiG"/>
    <property type="match status" value="1"/>
</dbReference>
<dbReference type="Gene3D" id="3.20.20.70">
    <property type="entry name" value="Aldolase class I"/>
    <property type="match status" value="1"/>
</dbReference>
<dbReference type="HAMAP" id="MF_00443">
    <property type="entry name" value="ThiG"/>
    <property type="match status" value="1"/>
</dbReference>
<dbReference type="InterPro" id="IPR013785">
    <property type="entry name" value="Aldolase_TIM"/>
</dbReference>
<dbReference type="InterPro" id="IPR033983">
    <property type="entry name" value="Thiazole_synthase_ThiG"/>
</dbReference>
<dbReference type="InterPro" id="IPR008867">
    <property type="entry name" value="ThiG"/>
</dbReference>
<dbReference type="PANTHER" id="PTHR34266">
    <property type="entry name" value="THIAZOLE SYNTHASE"/>
    <property type="match status" value="1"/>
</dbReference>
<dbReference type="PANTHER" id="PTHR34266:SF2">
    <property type="entry name" value="THIAZOLE SYNTHASE"/>
    <property type="match status" value="1"/>
</dbReference>
<dbReference type="Pfam" id="PF05690">
    <property type="entry name" value="ThiG"/>
    <property type="match status" value="1"/>
</dbReference>
<dbReference type="SUPFAM" id="SSF110399">
    <property type="entry name" value="ThiG-like"/>
    <property type="match status" value="1"/>
</dbReference>
<reference key="1">
    <citation type="journal article" date="2004" name="J. Mol. Evol.">
        <title>Comparative analysis of the complete plastid genome sequence of the red alga Gracilaria tenuistipitata var. liui provides insights into the evolution of rhodoplasts and their relationship to other plastids.</title>
        <authorList>
            <person name="Hagopian J.C."/>
            <person name="Reis M."/>
            <person name="Kitajima J.P."/>
            <person name="Bhattacharya D."/>
            <person name="de Oliveira M.C."/>
        </authorList>
    </citation>
    <scope>NUCLEOTIDE SEQUENCE [LARGE SCALE GENOMIC DNA]</scope>
</reference>
<comment type="function">
    <text evidence="1">Catalyzes the rearrangement of 1-deoxy-D-xylulose 5-phosphate (DXP) to produce the thiazole phosphate moiety of thiamine. Sulfur is provided by the thiocarboxylate moiety of the carrier protein ThiS. In vitro, sulfur can be provided by H(2)S.</text>
</comment>
<comment type="catalytic activity">
    <reaction evidence="1">
        <text>[ThiS sulfur-carrier protein]-C-terminal-Gly-aminoethanethioate + 2-iminoacetate + 1-deoxy-D-xylulose 5-phosphate = [ThiS sulfur-carrier protein]-C-terminal Gly-Gly + 2-[(2R,5Z)-2-carboxy-4-methylthiazol-5(2H)-ylidene]ethyl phosphate + 2 H2O + H(+)</text>
        <dbReference type="Rhea" id="RHEA:26297"/>
        <dbReference type="Rhea" id="RHEA-COMP:12909"/>
        <dbReference type="Rhea" id="RHEA-COMP:19908"/>
        <dbReference type="ChEBI" id="CHEBI:15377"/>
        <dbReference type="ChEBI" id="CHEBI:15378"/>
        <dbReference type="ChEBI" id="CHEBI:57792"/>
        <dbReference type="ChEBI" id="CHEBI:62899"/>
        <dbReference type="ChEBI" id="CHEBI:77846"/>
        <dbReference type="ChEBI" id="CHEBI:90778"/>
        <dbReference type="ChEBI" id="CHEBI:232372"/>
        <dbReference type="EC" id="2.8.1.10"/>
    </reaction>
</comment>
<comment type="pathway">
    <text evidence="1">Cofactor biosynthesis; thiamine diphosphate biosynthesis.</text>
</comment>
<comment type="subunit">
    <text evidence="1">Homotetramer. Forms heterodimers with either ThiH or ThiS.</text>
</comment>
<comment type="subcellular location">
    <subcellularLocation>
        <location>Plastid</location>
        <location>Chloroplast</location>
    </subcellularLocation>
</comment>
<comment type="similarity">
    <text evidence="1">Belongs to the ThiG family.</text>
</comment>
<evidence type="ECO:0000255" key="1">
    <source>
        <dbReference type="HAMAP-Rule" id="MF_00443"/>
    </source>
</evidence>
<protein>
    <recommendedName>
        <fullName evidence="1">Thiazole synthase</fullName>
        <ecNumber evidence="1">2.8.1.10</ecNumber>
    </recommendedName>
</protein>
<proteinExistence type="inferred from homology"/>
<organism>
    <name type="scientific">Gracilaria tenuistipitata var. liui</name>
    <name type="common">Red alga</name>
    <dbReference type="NCBI Taxonomy" id="285951"/>
    <lineage>
        <taxon>Eukaryota</taxon>
        <taxon>Rhodophyta</taxon>
        <taxon>Florideophyceae</taxon>
        <taxon>Rhodymeniophycidae</taxon>
        <taxon>Gracilariales</taxon>
        <taxon>Gracilariaceae</taxon>
        <taxon>Gracilaria</taxon>
        <taxon>Gracilaria tenuistipitata</taxon>
    </lineage>
</organism>
<keyword id="KW-0150">Chloroplast</keyword>
<keyword id="KW-0934">Plastid</keyword>
<keyword id="KW-0704">Schiff base</keyword>
<keyword id="KW-0784">Thiamine biosynthesis</keyword>
<keyword id="KW-0808">Transferase</keyword>
<gene>
    <name evidence="1" type="primary">thiG</name>
    <name type="ordered locus">Grc000029</name>
</gene>
<name>THIG_GRATL</name>
<feature type="chain" id="PRO_0000162887" description="Thiazole synthase">
    <location>
        <begin position="1"/>
        <end position="276"/>
    </location>
</feature>
<feature type="active site" description="Schiff-base intermediate with DXP" evidence="1">
    <location>
        <position position="117"/>
    </location>
</feature>
<feature type="binding site" evidence="1">
    <location>
        <position position="178"/>
    </location>
    <ligand>
        <name>1-deoxy-D-xylulose 5-phosphate</name>
        <dbReference type="ChEBI" id="CHEBI:57792"/>
    </ligand>
</feature>
<feature type="binding site" evidence="1">
    <location>
        <begin position="204"/>
        <end position="205"/>
    </location>
    <ligand>
        <name>1-deoxy-D-xylulose 5-phosphate</name>
        <dbReference type="ChEBI" id="CHEBI:57792"/>
    </ligand>
</feature>
<feature type="binding site" evidence="1">
    <location>
        <begin position="226"/>
        <end position="227"/>
    </location>
    <ligand>
        <name>1-deoxy-D-xylulose 5-phosphate</name>
        <dbReference type="ChEBI" id="CHEBI:57792"/>
    </ligand>
</feature>